<evidence type="ECO:0000255" key="1"/>
<evidence type="ECO:0000255" key="2">
    <source>
        <dbReference type="PROSITE-ProRule" id="PRU00388"/>
    </source>
</evidence>
<evidence type="ECO:0000255" key="3">
    <source>
        <dbReference type="PROSITE-ProRule" id="PRU10133"/>
    </source>
</evidence>
<evidence type="ECO:0000256" key="4">
    <source>
        <dbReference type="SAM" id="MobiDB-lite"/>
    </source>
</evidence>
<evidence type="ECO:0000269" key="5">
    <source>
    </source>
</evidence>
<protein>
    <recommendedName>
        <fullName>Ubiquitin-conjugating enzyme E2 22</fullName>
        <ecNumber>2.3.2.23</ecNumber>
    </recommendedName>
    <alternativeName>
        <fullName>E2 ubiquitin-conjugating enzyme 22</fullName>
    </alternativeName>
    <alternativeName>
        <fullName>Ubiquitin carrier protein 22</fullName>
    </alternativeName>
</protein>
<keyword id="KW-0067">ATP-binding</keyword>
<keyword id="KW-0175">Coiled coil</keyword>
<keyword id="KW-0547">Nucleotide-binding</keyword>
<keyword id="KW-1185">Reference proteome</keyword>
<keyword id="KW-0808">Transferase</keyword>
<keyword id="KW-0832">Ubl conjugation</keyword>
<keyword id="KW-0833">Ubl conjugation pathway</keyword>
<organism>
    <name type="scientific">Arabidopsis thaliana</name>
    <name type="common">Mouse-ear cress</name>
    <dbReference type="NCBI Taxonomy" id="3702"/>
    <lineage>
        <taxon>Eukaryota</taxon>
        <taxon>Viridiplantae</taxon>
        <taxon>Streptophyta</taxon>
        <taxon>Embryophyta</taxon>
        <taxon>Tracheophyta</taxon>
        <taxon>Spermatophyta</taxon>
        <taxon>Magnoliopsida</taxon>
        <taxon>eudicotyledons</taxon>
        <taxon>Gunneridae</taxon>
        <taxon>Pentapetalae</taxon>
        <taxon>rosids</taxon>
        <taxon>malvids</taxon>
        <taxon>Brassicales</taxon>
        <taxon>Brassicaceae</taxon>
        <taxon>Camelineae</taxon>
        <taxon>Arabidopsis</taxon>
    </lineage>
</organism>
<proteinExistence type="evidence at protein level"/>
<reference key="1">
    <citation type="journal article" date="2005" name="Plant Physiol.">
        <title>Genome analysis and functional characterization of the E2 and RING-type E3 ligase ubiquitination enzymes of Arabidopsis.</title>
        <authorList>
            <person name="Kraft E."/>
            <person name="Stone S.L."/>
            <person name="Ma L."/>
            <person name="Su N."/>
            <person name="Gao Y."/>
            <person name="Lau O.-S."/>
            <person name="Deng X.-W."/>
            <person name="Callis J."/>
        </authorList>
    </citation>
    <scope>NUCLEOTIDE SEQUENCE [MRNA]</scope>
    <scope>FUNCTION</scope>
    <scope>TISSUE SPECIFICITY</scope>
    <scope>INDUCTION</scope>
    <scope>UBIQUITINATION</scope>
    <scope>GENE FAMILY</scope>
    <scope>NOMENCLATURE</scope>
</reference>
<reference key="2">
    <citation type="journal article" date="1997" name="DNA Res.">
        <title>Structural analysis of Arabidopsis thaliana chromosome 5. I. Sequence features of the 1.6 Mb regions covered by twenty physically assigned P1 clones.</title>
        <authorList>
            <person name="Sato S."/>
            <person name="Kotani H."/>
            <person name="Nakamura Y."/>
            <person name="Kaneko T."/>
            <person name="Asamizu E."/>
            <person name="Fukami M."/>
            <person name="Miyajima N."/>
            <person name="Tabata S."/>
        </authorList>
    </citation>
    <scope>NUCLEOTIDE SEQUENCE [LARGE SCALE GENOMIC DNA]</scope>
    <source>
        <strain>cv. Columbia</strain>
    </source>
</reference>
<reference key="3">
    <citation type="journal article" date="2017" name="Plant J.">
        <title>Araport11: a complete reannotation of the Arabidopsis thaliana reference genome.</title>
        <authorList>
            <person name="Cheng C.Y."/>
            <person name="Krishnakumar V."/>
            <person name="Chan A.P."/>
            <person name="Thibaud-Nissen F."/>
            <person name="Schobel S."/>
            <person name="Town C.D."/>
        </authorList>
    </citation>
    <scope>GENOME REANNOTATION</scope>
    <source>
        <strain>cv. Columbia</strain>
    </source>
</reference>
<reference key="4">
    <citation type="journal article" date="2003" name="Science">
        <title>Empirical analysis of transcriptional activity in the Arabidopsis genome.</title>
        <authorList>
            <person name="Yamada K."/>
            <person name="Lim J."/>
            <person name="Dale J.M."/>
            <person name="Chen H."/>
            <person name="Shinn P."/>
            <person name="Palm C.J."/>
            <person name="Southwick A.M."/>
            <person name="Wu H.C."/>
            <person name="Kim C.J."/>
            <person name="Nguyen M."/>
            <person name="Pham P.K."/>
            <person name="Cheuk R.F."/>
            <person name="Karlin-Newmann G."/>
            <person name="Liu S.X."/>
            <person name="Lam B."/>
            <person name="Sakano H."/>
            <person name="Wu T."/>
            <person name="Yu G."/>
            <person name="Miranda M."/>
            <person name="Quach H.L."/>
            <person name="Tripp M."/>
            <person name="Chang C.H."/>
            <person name="Lee J.M."/>
            <person name="Toriumi M.J."/>
            <person name="Chan M.M."/>
            <person name="Tang C.C."/>
            <person name="Onodera C.S."/>
            <person name="Deng J.M."/>
            <person name="Akiyama K."/>
            <person name="Ansari Y."/>
            <person name="Arakawa T."/>
            <person name="Banh J."/>
            <person name="Banno F."/>
            <person name="Bowser L."/>
            <person name="Brooks S.Y."/>
            <person name="Carninci P."/>
            <person name="Chao Q."/>
            <person name="Choy N."/>
            <person name="Enju A."/>
            <person name="Goldsmith A.D."/>
            <person name="Gurjal M."/>
            <person name="Hansen N.F."/>
            <person name="Hayashizaki Y."/>
            <person name="Johnson-Hopson C."/>
            <person name="Hsuan V.W."/>
            <person name="Iida K."/>
            <person name="Karnes M."/>
            <person name="Khan S."/>
            <person name="Koesema E."/>
            <person name="Ishida J."/>
            <person name="Jiang P.X."/>
            <person name="Jones T."/>
            <person name="Kawai J."/>
            <person name="Kamiya A."/>
            <person name="Meyers C."/>
            <person name="Nakajima M."/>
            <person name="Narusaka M."/>
            <person name="Seki M."/>
            <person name="Sakurai T."/>
            <person name="Satou M."/>
            <person name="Tamse R."/>
            <person name="Vaysberg M."/>
            <person name="Wallender E.K."/>
            <person name="Wong C."/>
            <person name="Yamamura Y."/>
            <person name="Yuan S."/>
            <person name="Shinozaki K."/>
            <person name="Davis R.W."/>
            <person name="Theologis A."/>
            <person name="Ecker J.R."/>
        </authorList>
    </citation>
    <scope>NUCLEOTIDE SEQUENCE [LARGE SCALE MRNA]</scope>
    <source>
        <strain>cv. Columbia</strain>
    </source>
</reference>
<reference key="5">
    <citation type="submission" date="2002-03" db="EMBL/GenBank/DDBJ databases">
        <title>Full-length cDNA from Arabidopsis thaliana.</title>
        <authorList>
            <person name="Brover V.V."/>
            <person name="Troukhan M.E."/>
            <person name="Alexandrov N.A."/>
            <person name="Lu Y.-P."/>
            <person name="Flavell R.B."/>
            <person name="Feldmann K.A."/>
        </authorList>
    </citation>
    <scope>NUCLEOTIDE SEQUENCE [LARGE SCALE MRNA]</scope>
</reference>
<name>UBC22_ARATH</name>
<accession>Q9FF66</accession>
<feature type="chain" id="PRO_0000345188" description="Ubiquitin-conjugating enzyme E2 22">
    <location>
        <begin position="1"/>
        <end position="251"/>
    </location>
</feature>
<feature type="domain" description="UBC core" evidence="2">
    <location>
        <begin position="10"/>
        <end position="156"/>
    </location>
</feature>
<feature type="region of interest" description="Disordered" evidence="4">
    <location>
        <begin position="230"/>
        <end position="251"/>
    </location>
</feature>
<feature type="coiled-coil region" evidence="1">
    <location>
        <begin position="230"/>
        <end position="251"/>
    </location>
</feature>
<feature type="compositionally biased region" description="Basic and acidic residues" evidence="4">
    <location>
        <begin position="230"/>
        <end position="240"/>
    </location>
</feature>
<feature type="compositionally biased region" description="Basic residues" evidence="4">
    <location>
        <begin position="241"/>
        <end position="251"/>
    </location>
</feature>
<feature type="active site" description="Glycyl thioester intermediate" evidence="2 3">
    <location>
        <position position="94"/>
    </location>
</feature>
<comment type="function">
    <text evidence="5">Accepts the ubiquitin from the E1 complex and catalyzes its covalent attachment to other proteins.</text>
</comment>
<comment type="catalytic activity">
    <reaction evidence="2 3">
        <text>S-ubiquitinyl-[E1 ubiquitin-activating enzyme]-L-cysteine + [E2 ubiquitin-conjugating enzyme]-L-cysteine = [E1 ubiquitin-activating enzyme]-L-cysteine + S-ubiquitinyl-[E2 ubiquitin-conjugating enzyme]-L-cysteine.</text>
        <dbReference type="EC" id="2.3.2.23"/>
    </reaction>
</comment>
<comment type="pathway">
    <text evidence="2">Protein modification; protein ubiquitination.</text>
</comment>
<comment type="tissue specificity">
    <text evidence="5">Expressed in seeds, pistils, siliques, hypocotyls and leaves.</text>
</comment>
<comment type="induction">
    <text evidence="5">By the herbicide isoxaben.</text>
</comment>
<comment type="PTM">
    <text evidence="5">Self-ubiquitinated.</text>
</comment>
<comment type="similarity">
    <text evidence="2">Belongs to the ubiquitin-conjugating enzyme family.</text>
</comment>
<sequence length="251" mass="27399">MASNENLPPNVIKQLAKELKSLDESPPDGIKVVVNDEDFSQICADIEGPVGTPYENGLFRMKLALSHDFPHSPPKGYFMTKIFHPNVASNGEICVNTLKKDWNPSLGLRHVLSVVRCLLIEPFPESALNEQAGKMLLENYDEYARHARLYTGIHAKPKPKFKTGAISESTTALNVGQTNNETPGAATAIPSSMTDIKRVTTSAQDQQHVANVVVAASASVVTTTQKREAGLAKVQADKKKVDARKKSLKRL</sequence>
<dbReference type="EC" id="2.3.2.23"/>
<dbReference type="EMBL" id="DQ027036">
    <property type="protein sequence ID" value="AAY44862.1"/>
    <property type="molecule type" value="mRNA"/>
</dbReference>
<dbReference type="EMBL" id="AB005245">
    <property type="protein sequence ID" value="BAB11530.1"/>
    <property type="molecule type" value="Genomic_DNA"/>
</dbReference>
<dbReference type="EMBL" id="CP002688">
    <property type="protein sequence ID" value="AED90825.1"/>
    <property type="molecule type" value="Genomic_DNA"/>
</dbReference>
<dbReference type="EMBL" id="CP002688">
    <property type="protein sequence ID" value="AED90826.1"/>
    <property type="molecule type" value="Genomic_DNA"/>
</dbReference>
<dbReference type="EMBL" id="CP002688">
    <property type="protein sequence ID" value="ANM71122.1"/>
    <property type="molecule type" value="Genomic_DNA"/>
</dbReference>
<dbReference type="EMBL" id="CP002688">
    <property type="protein sequence ID" value="ANM71123.1"/>
    <property type="molecule type" value="Genomic_DNA"/>
</dbReference>
<dbReference type="EMBL" id="AY116948">
    <property type="protein sequence ID" value="AAM51582.1"/>
    <property type="molecule type" value="mRNA"/>
</dbReference>
<dbReference type="EMBL" id="AF428320">
    <property type="protein sequence ID" value="AAL16250.1"/>
    <property type="molecule type" value="mRNA"/>
</dbReference>
<dbReference type="EMBL" id="AY088106">
    <property type="protein sequence ID" value="AAM65652.1"/>
    <property type="molecule type" value="mRNA"/>
</dbReference>
<dbReference type="RefSeq" id="NP_001078530.1">
    <property type="nucleotide sequence ID" value="NM_001085061.1"/>
</dbReference>
<dbReference type="RefSeq" id="NP_001332673.1">
    <property type="nucleotide sequence ID" value="NM_001342802.1"/>
</dbReference>
<dbReference type="RefSeq" id="NP_001332674.1">
    <property type="nucleotide sequence ID" value="NM_001342801.1"/>
</dbReference>
<dbReference type="RefSeq" id="NP_568148.1">
    <property type="nucleotide sequence ID" value="NM_120590.3"/>
</dbReference>
<dbReference type="SMR" id="Q9FF66"/>
<dbReference type="FunCoup" id="Q9FF66">
    <property type="interactions" value="4201"/>
</dbReference>
<dbReference type="STRING" id="3702.Q9FF66"/>
<dbReference type="PaxDb" id="3702-AT5G05080.1"/>
<dbReference type="ProteomicsDB" id="243216"/>
<dbReference type="EnsemblPlants" id="AT5G05080.1">
    <property type="protein sequence ID" value="AT5G05080.1"/>
    <property type="gene ID" value="AT5G05080"/>
</dbReference>
<dbReference type="EnsemblPlants" id="AT5G05080.2">
    <property type="protein sequence ID" value="AT5G05080.2"/>
    <property type="gene ID" value="AT5G05080"/>
</dbReference>
<dbReference type="EnsemblPlants" id="AT5G05080.3">
    <property type="protein sequence ID" value="AT5G05080.3"/>
    <property type="gene ID" value="AT5G05080"/>
</dbReference>
<dbReference type="EnsemblPlants" id="AT5G05080.4">
    <property type="protein sequence ID" value="AT5G05080.4"/>
    <property type="gene ID" value="AT5G05080"/>
</dbReference>
<dbReference type="GeneID" id="830390"/>
<dbReference type="Gramene" id="AT5G05080.1">
    <property type="protein sequence ID" value="AT5G05080.1"/>
    <property type="gene ID" value="AT5G05080"/>
</dbReference>
<dbReference type="Gramene" id="AT5G05080.2">
    <property type="protein sequence ID" value="AT5G05080.2"/>
    <property type="gene ID" value="AT5G05080"/>
</dbReference>
<dbReference type="Gramene" id="AT5G05080.3">
    <property type="protein sequence ID" value="AT5G05080.3"/>
    <property type="gene ID" value="AT5G05080"/>
</dbReference>
<dbReference type="Gramene" id="AT5G05080.4">
    <property type="protein sequence ID" value="AT5G05080.4"/>
    <property type="gene ID" value="AT5G05080"/>
</dbReference>
<dbReference type="KEGG" id="ath:AT5G05080"/>
<dbReference type="Araport" id="AT5G05080"/>
<dbReference type="TAIR" id="AT5G05080">
    <property type="gene designation" value="UBC22"/>
</dbReference>
<dbReference type="eggNOG" id="KOG0423">
    <property type="taxonomic scope" value="Eukaryota"/>
</dbReference>
<dbReference type="HOGENOM" id="CLU_030988_5_0_1"/>
<dbReference type="InParanoid" id="Q9FF66"/>
<dbReference type="OMA" id="NVGQTHT"/>
<dbReference type="OrthoDB" id="10069349at2759"/>
<dbReference type="PhylomeDB" id="Q9FF66"/>
<dbReference type="UniPathway" id="UPA00143"/>
<dbReference type="PRO" id="PR:Q9FF66"/>
<dbReference type="Proteomes" id="UP000006548">
    <property type="component" value="Chromosome 5"/>
</dbReference>
<dbReference type="ExpressionAtlas" id="Q9FF66">
    <property type="expression patterns" value="baseline and differential"/>
</dbReference>
<dbReference type="GO" id="GO:0005524">
    <property type="term" value="F:ATP binding"/>
    <property type="evidence" value="ECO:0007669"/>
    <property type="project" value="UniProtKB-KW"/>
</dbReference>
<dbReference type="GO" id="GO:0061631">
    <property type="term" value="F:ubiquitin conjugating enzyme activity"/>
    <property type="evidence" value="ECO:0007669"/>
    <property type="project" value="UniProtKB-EC"/>
</dbReference>
<dbReference type="GO" id="GO:0004842">
    <property type="term" value="F:ubiquitin-protein transferase activity"/>
    <property type="evidence" value="ECO:0000314"/>
    <property type="project" value="TAIR"/>
</dbReference>
<dbReference type="GO" id="GO:0016567">
    <property type="term" value="P:protein ubiquitination"/>
    <property type="evidence" value="ECO:0007669"/>
    <property type="project" value="UniProtKB-UniPathway"/>
</dbReference>
<dbReference type="GO" id="GO:0006511">
    <property type="term" value="P:ubiquitin-dependent protein catabolic process"/>
    <property type="evidence" value="ECO:0000314"/>
    <property type="project" value="TAIR"/>
</dbReference>
<dbReference type="CDD" id="cd23804">
    <property type="entry name" value="UBCc_UBE2S"/>
    <property type="match status" value="1"/>
</dbReference>
<dbReference type="FunFam" id="3.10.110.10:FF:000031">
    <property type="entry name" value="Ubiquitin-conjugating enzyme E2 22"/>
    <property type="match status" value="1"/>
</dbReference>
<dbReference type="Gene3D" id="3.10.110.10">
    <property type="entry name" value="Ubiquitin Conjugating Enzyme"/>
    <property type="match status" value="1"/>
</dbReference>
<dbReference type="InterPro" id="IPR050113">
    <property type="entry name" value="Ub_conjugating_enzyme"/>
</dbReference>
<dbReference type="InterPro" id="IPR000608">
    <property type="entry name" value="UBQ-conjugat_E2_core"/>
</dbReference>
<dbReference type="InterPro" id="IPR023313">
    <property type="entry name" value="UBQ-conjugating_AS"/>
</dbReference>
<dbReference type="InterPro" id="IPR016135">
    <property type="entry name" value="UBQ-conjugating_enzyme/RWD"/>
</dbReference>
<dbReference type="PANTHER" id="PTHR24067">
    <property type="entry name" value="UBIQUITIN-CONJUGATING ENZYME E2"/>
    <property type="match status" value="1"/>
</dbReference>
<dbReference type="Pfam" id="PF00179">
    <property type="entry name" value="UQ_con"/>
    <property type="match status" value="1"/>
</dbReference>
<dbReference type="SMART" id="SM00212">
    <property type="entry name" value="UBCc"/>
    <property type="match status" value="1"/>
</dbReference>
<dbReference type="SUPFAM" id="SSF54495">
    <property type="entry name" value="UBC-like"/>
    <property type="match status" value="1"/>
</dbReference>
<dbReference type="PROSITE" id="PS00183">
    <property type="entry name" value="UBC_1"/>
    <property type="match status" value="1"/>
</dbReference>
<dbReference type="PROSITE" id="PS50127">
    <property type="entry name" value="UBC_2"/>
    <property type="match status" value="1"/>
</dbReference>
<gene>
    <name type="primary">UBC22</name>
    <name type="ordered locus">At5g05080</name>
    <name type="ORF">MUG13.6</name>
</gene>